<organism>
    <name type="scientific">Natranaerobius thermophilus (strain ATCC BAA-1301 / DSM 18059 / JW/NM-WN-LF)</name>
    <dbReference type="NCBI Taxonomy" id="457570"/>
    <lineage>
        <taxon>Bacteria</taxon>
        <taxon>Bacillati</taxon>
        <taxon>Bacillota</taxon>
        <taxon>Clostridia</taxon>
        <taxon>Natranaerobiales</taxon>
        <taxon>Natranaerobiaceae</taxon>
        <taxon>Natranaerobius</taxon>
    </lineage>
</organism>
<proteinExistence type="inferred from homology"/>
<evidence type="ECO:0000255" key="1">
    <source>
        <dbReference type="HAMAP-Rule" id="MF_01808"/>
    </source>
</evidence>
<evidence type="ECO:0000255" key="2">
    <source>
        <dbReference type="PROSITE-ProRule" id="PRU01246"/>
    </source>
</evidence>
<evidence type="ECO:0000255" key="3">
    <source>
        <dbReference type="PROSITE-ProRule" id="PRU01248"/>
    </source>
</evidence>
<sequence length="299" mass="34775">MRNELLDFLEFLKGEKNLSHYTVDNYYKDLTQAENFFNEQFELYQWDEVTHKHIRHFLAYLKDKNYEKSTTARKLSAIRSLFKFLTREEKIRSNTSALLATPKKERKLPEFLSIEEVEMLINAPGDDPFGLRDKAILEVFYCSGIRLGELWGLDLQNLDLQTGYLKVTGKGNIERLAPLGSFALAAIEDYLYNARPELLKKNKSVENCDALFLNKFGTRISQRSIRRRVKKYVQQTASEHRVSPHSLRHSFATHLLEGGADLRAVQELLGHVNISTTQIYTHVNQARMTEVYNKYHPRA</sequence>
<keyword id="KW-0131">Cell cycle</keyword>
<keyword id="KW-0132">Cell division</keyword>
<keyword id="KW-0159">Chromosome partition</keyword>
<keyword id="KW-0963">Cytoplasm</keyword>
<keyword id="KW-0229">DNA integration</keyword>
<keyword id="KW-0233">DNA recombination</keyword>
<keyword id="KW-0238">DNA-binding</keyword>
<keyword id="KW-1185">Reference proteome</keyword>
<gene>
    <name evidence="1" type="primary">xerC</name>
    <name type="ordered locus">Nther_1383</name>
</gene>
<reference key="1">
    <citation type="submission" date="2008-04" db="EMBL/GenBank/DDBJ databases">
        <title>Complete sequence of chromosome of Natranaerobius thermophilus JW/NM-WN-LF.</title>
        <authorList>
            <consortium name="US DOE Joint Genome Institute"/>
            <person name="Copeland A."/>
            <person name="Lucas S."/>
            <person name="Lapidus A."/>
            <person name="Glavina del Rio T."/>
            <person name="Dalin E."/>
            <person name="Tice H."/>
            <person name="Bruce D."/>
            <person name="Goodwin L."/>
            <person name="Pitluck S."/>
            <person name="Chertkov O."/>
            <person name="Brettin T."/>
            <person name="Detter J.C."/>
            <person name="Han C."/>
            <person name="Kuske C.R."/>
            <person name="Schmutz J."/>
            <person name="Larimer F."/>
            <person name="Land M."/>
            <person name="Hauser L."/>
            <person name="Kyrpides N."/>
            <person name="Lykidis A."/>
            <person name="Mesbah N.M."/>
            <person name="Wiegel J."/>
        </authorList>
    </citation>
    <scope>NUCLEOTIDE SEQUENCE [LARGE SCALE GENOMIC DNA]</scope>
    <source>
        <strain>ATCC BAA-1301 / DSM 18059 / JW/NM-WN-LF</strain>
    </source>
</reference>
<dbReference type="EMBL" id="CP001034">
    <property type="protein sequence ID" value="ACB84966.1"/>
    <property type="molecule type" value="Genomic_DNA"/>
</dbReference>
<dbReference type="RefSeq" id="WP_012447841.1">
    <property type="nucleotide sequence ID" value="NC_010718.1"/>
</dbReference>
<dbReference type="SMR" id="B2A335"/>
<dbReference type="STRING" id="457570.Nther_1383"/>
<dbReference type="KEGG" id="nth:Nther_1383"/>
<dbReference type="eggNOG" id="COG4974">
    <property type="taxonomic scope" value="Bacteria"/>
</dbReference>
<dbReference type="HOGENOM" id="CLU_027562_9_6_9"/>
<dbReference type="InParanoid" id="B2A335"/>
<dbReference type="OrthoDB" id="283809at2"/>
<dbReference type="Proteomes" id="UP000001683">
    <property type="component" value="Chromosome"/>
</dbReference>
<dbReference type="GO" id="GO:0005737">
    <property type="term" value="C:cytoplasm"/>
    <property type="evidence" value="ECO:0007669"/>
    <property type="project" value="UniProtKB-SubCell"/>
</dbReference>
<dbReference type="GO" id="GO:0003677">
    <property type="term" value="F:DNA binding"/>
    <property type="evidence" value="ECO:0007669"/>
    <property type="project" value="UniProtKB-KW"/>
</dbReference>
<dbReference type="GO" id="GO:0009037">
    <property type="term" value="F:tyrosine-based site-specific recombinase activity"/>
    <property type="evidence" value="ECO:0007669"/>
    <property type="project" value="UniProtKB-UniRule"/>
</dbReference>
<dbReference type="GO" id="GO:0051301">
    <property type="term" value="P:cell division"/>
    <property type="evidence" value="ECO:0007669"/>
    <property type="project" value="UniProtKB-KW"/>
</dbReference>
<dbReference type="GO" id="GO:0007059">
    <property type="term" value="P:chromosome segregation"/>
    <property type="evidence" value="ECO:0007669"/>
    <property type="project" value="UniProtKB-UniRule"/>
</dbReference>
<dbReference type="GO" id="GO:0006313">
    <property type="term" value="P:DNA transposition"/>
    <property type="evidence" value="ECO:0007669"/>
    <property type="project" value="UniProtKB-UniRule"/>
</dbReference>
<dbReference type="CDD" id="cd00798">
    <property type="entry name" value="INT_XerDC_C"/>
    <property type="match status" value="1"/>
</dbReference>
<dbReference type="Gene3D" id="1.10.150.130">
    <property type="match status" value="1"/>
</dbReference>
<dbReference type="Gene3D" id="1.10.443.10">
    <property type="entry name" value="Intergrase catalytic core"/>
    <property type="match status" value="1"/>
</dbReference>
<dbReference type="HAMAP" id="MF_01808">
    <property type="entry name" value="Recomb_XerC_XerD"/>
    <property type="match status" value="1"/>
</dbReference>
<dbReference type="InterPro" id="IPR044068">
    <property type="entry name" value="CB"/>
</dbReference>
<dbReference type="InterPro" id="IPR011010">
    <property type="entry name" value="DNA_brk_join_enz"/>
</dbReference>
<dbReference type="InterPro" id="IPR013762">
    <property type="entry name" value="Integrase-like_cat_sf"/>
</dbReference>
<dbReference type="InterPro" id="IPR002104">
    <property type="entry name" value="Integrase_catalytic"/>
</dbReference>
<dbReference type="InterPro" id="IPR010998">
    <property type="entry name" value="Integrase_recombinase_N"/>
</dbReference>
<dbReference type="InterPro" id="IPR004107">
    <property type="entry name" value="Integrase_SAM-like_N"/>
</dbReference>
<dbReference type="InterPro" id="IPR011931">
    <property type="entry name" value="Recomb_XerC"/>
</dbReference>
<dbReference type="InterPro" id="IPR023009">
    <property type="entry name" value="Tyrosine_recombinase_XerC/XerD"/>
</dbReference>
<dbReference type="InterPro" id="IPR050090">
    <property type="entry name" value="Tyrosine_recombinase_XerCD"/>
</dbReference>
<dbReference type="NCBIfam" id="NF001399">
    <property type="entry name" value="PRK00283.1"/>
    <property type="match status" value="1"/>
</dbReference>
<dbReference type="NCBIfam" id="TIGR02224">
    <property type="entry name" value="recomb_XerC"/>
    <property type="match status" value="1"/>
</dbReference>
<dbReference type="PANTHER" id="PTHR30349">
    <property type="entry name" value="PHAGE INTEGRASE-RELATED"/>
    <property type="match status" value="1"/>
</dbReference>
<dbReference type="PANTHER" id="PTHR30349:SF77">
    <property type="entry name" value="TYROSINE RECOMBINASE XERC"/>
    <property type="match status" value="1"/>
</dbReference>
<dbReference type="Pfam" id="PF02899">
    <property type="entry name" value="Phage_int_SAM_1"/>
    <property type="match status" value="1"/>
</dbReference>
<dbReference type="Pfam" id="PF00589">
    <property type="entry name" value="Phage_integrase"/>
    <property type="match status" value="1"/>
</dbReference>
<dbReference type="SUPFAM" id="SSF56349">
    <property type="entry name" value="DNA breaking-rejoining enzymes"/>
    <property type="match status" value="1"/>
</dbReference>
<dbReference type="PROSITE" id="PS51900">
    <property type="entry name" value="CB"/>
    <property type="match status" value="1"/>
</dbReference>
<dbReference type="PROSITE" id="PS51898">
    <property type="entry name" value="TYR_RECOMBINASE"/>
    <property type="match status" value="1"/>
</dbReference>
<name>XERC_NATTJ</name>
<accession>B2A335</accession>
<comment type="function">
    <text evidence="1">Site-specific tyrosine recombinase, which acts by catalyzing the cutting and rejoining of the recombining DNA molecules. The XerC-XerD complex is essential to convert dimers of the bacterial chromosome into monomers to permit their segregation at cell division. It also contributes to the segregational stability of plasmids.</text>
</comment>
<comment type="subunit">
    <text evidence="1">Forms a cyclic heterotetrameric complex composed of two molecules of XerC and two molecules of XerD.</text>
</comment>
<comment type="subcellular location">
    <subcellularLocation>
        <location evidence="1">Cytoplasm</location>
    </subcellularLocation>
</comment>
<comment type="similarity">
    <text evidence="1">Belongs to the 'phage' integrase family. XerC subfamily.</text>
</comment>
<protein>
    <recommendedName>
        <fullName evidence="1">Tyrosine recombinase XerC</fullName>
    </recommendedName>
</protein>
<feature type="chain" id="PRO_1000187604" description="Tyrosine recombinase XerC">
    <location>
        <begin position="1"/>
        <end position="299"/>
    </location>
</feature>
<feature type="domain" description="Core-binding (CB)" evidence="3">
    <location>
        <begin position="1"/>
        <end position="86"/>
    </location>
</feature>
<feature type="domain" description="Tyr recombinase" evidence="2">
    <location>
        <begin position="107"/>
        <end position="293"/>
    </location>
</feature>
<feature type="active site" evidence="1">
    <location>
        <position position="146"/>
    </location>
</feature>
<feature type="active site" evidence="1">
    <location>
        <position position="170"/>
    </location>
</feature>
<feature type="active site" evidence="1">
    <location>
        <position position="245"/>
    </location>
</feature>
<feature type="active site" evidence="1">
    <location>
        <position position="248"/>
    </location>
</feature>
<feature type="active site" evidence="1">
    <location>
        <position position="271"/>
    </location>
</feature>
<feature type="active site" description="O-(3'-phospho-DNA)-tyrosine intermediate" evidence="1">
    <location>
        <position position="280"/>
    </location>
</feature>